<keyword id="KW-0414">Isoprene biosynthesis</keyword>
<keyword id="KW-0460">Magnesium</keyword>
<keyword id="KW-0479">Metal-binding</keyword>
<keyword id="KW-0784">Thiamine biosynthesis</keyword>
<keyword id="KW-0786">Thiamine pyrophosphate</keyword>
<keyword id="KW-0808">Transferase</keyword>
<feature type="chain" id="PRO_1000071996" description="1-deoxy-D-xylulose-5-phosphate synthase">
    <location>
        <begin position="1"/>
        <end position="634"/>
    </location>
</feature>
<feature type="binding site" evidence="1">
    <location>
        <position position="72"/>
    </location>
    <ligand>
        <name>thiamine diphosphate</name>
        <dbReference type="ChEBI" id="CHEBI:58937"/>
    </ligand>
</feature>
<feature type="binding site" evidence="1">
    <location>
        <begin position="113"/>
        <end position="115"/>
    </location>
    <ligand>
        <name>thiamine diphosphate</name>
        <dbReference type="ChEBI" id="CHEBI:58937"/>
    </ligand>
</feature>
<feature type="binding site" evidence="1">
    <location>
        <position position="144"/>
    </location>
    <ligand>
        <name>Mg(2+)</name>
        <dbReference type="ChEBI" id="CHEBI:18420"/>
    </ligand>
</feature>
<feature type="binding site" evidence="1">
    <location>
        <begin position="145"/>
        <end position="146"/>
    </location>
    <ligand>
        <name>thiamine diphosphate</name>
        <dbReference type="ChEBI" id="CHEBI:58937"/>
    </ligand>
</feature>
<feature type="binding site" evidence="1">
    <location>
        <position position="173"/>
    </location>
    <ligand>
        <name>Mg(2+)</name>
        <dbReference type="ChEBI" id="CHEBI:18420"/>
    </ligand>
</feature>
<feature type="binding site" evidence="1">
    <location>
        <position position="173"/>
    </location>
    <ligand>
        <name>thiamine diphosphate</name>
        <dbReference type="ChEBI" id="CHEBI:58937"/>
    </ligand>
</feature>
<feature type="binding site" evidence="1">
    <location>
        <position position="284"/>
    </location>
    <ligand>
        <name>thiamine diphosphate</name>
        <dbReference type="ChEBI" id="CHEBI:58937"/>
    </ligand>
</feature>
<feature type="binding site" evidence="1">
    <location>
        <position position="367"/>
    </location>
    <ligand>
        <name>thiamine diphosphate</name>
        <dbReference type="ChEBI" id="CHEBI:58937"/>
    </ligand>
</feature>
<dbReference type="EC" id="2.2.1.7" evidence="1"/>
<dbReference type="EMBL" id="AM263198">
    <property type="protein sequence ID" value="CAK20798.1"/>
    <property type="molecule type" value="Genomic_DNA"/>
</dbReference>
<dbReference type="SMR" id="A0AIG6"/>
<dbReference type="STRING" id="386043.lwe1380"/>
<dbReference type="KEGG" id="lwe:lwe1380"/>
<dbReference type="eggNOG" id="COG1154">
    <property type="taxonomic scope" value="Bacteria"/>
</dbReference>
<dbReference type="HOGENOM" id="CLU_009227_1_4_9"/>
<dbReference type="UniPathway" id="UPA00064">
    <property type="reaction ID" value="UER00091"/>
</dbReference>
<dbReference type="Proteomes" id="UP000000779">
    <property type="component" value="Chromosome"/>
</dbReference>
<dbReference type="GO" id="GO:0005829">
    <property type="term" value="C:cytosol"/>
    <property type="evidence" value="ECO:0007669"/>
    <property type="project" value="TreeGrafter"/>
</dbReference>
<dbReference type="GO" id="GO:0008661">
    <property type="term" value="F:1-deoxy-D-xylulose-5-phosphate synthase activity"/>
    <property type="evidence" value="ECO:0007669"/>
    <property type="project" value="UniProtKB-UniRule"/>
</dbReference>
<dbReference type="GO" id="GO:0000287">
    <property type="term" value="F:magnesium ion binding"/>
    <property type="evidence" value="ECO:0007669"/>
    <property type="project" value="UniProtKB-UniRule"/>
</dbReference>
<dbReference type="GO" id="GO:0030976">
    <property type="term" value="F:thiamine pyrophosphate binding"/>
    <property type="evidence" value="ECO:0007669"/>
    <property type="project" value="UniProtKB-UniRule"/>
</dbReference>
<dbReference type="GO" id="GO:0052865">
    <property type="term" value="P:1-deoxy-D-xylulose 5-phosphate biosynthetic process"/>
    <property type="evidence" value="ECO:0007669"/>
    <property type="project" value="UniProtKB-UniPathway"/>
</dbReference>
<dbReference type="GO" id="GO:0019288">
    <property type="term" value="P:isopentenyl diphosphate biosynthetic process, methylerythritol 4-phosphate pathway"/>
    <property type="evidence" value="ECO:0007669"/>
    <property type="project" value="TreeGrafter"/>
</dbReference>
<dbReference type="GO" id="GO:0016114">
    <property type="term" value="P:terpenoid biosynthetic process"/>
    <property type="evidence" value="ECO:0007669"/>
    <property type="project" value="UniProtKB-UniRule"/>
</dbReference>
<dbReference type="GO" id="GO:0009228">
    <property type="term" value="P:thiamine biosynthetic process"/>
    <property type="evidence" value="ECO:0007669"/>
    <property type="project" value="UniProtKB-UniRule"/>
</dbReference>
<dbReference type="CDD" id="cd02007">
    <property type="entry name" value="TPP_DXS"/>
    <property type="match status" value="1"/>
</dbReference>
<dbReference type="CDD" id="cd07033">
    <property type="entry name" value="TPP_PYR_DXS_TK_like"/>
    <property type="match status" value="1"/>
</dbReference>
<dbReference type="FunFam" id="3.40.50.920:FF:000002">
    <property type="entry name" value="1-deoxy-D-xylulose-5-phosphate synthase"/>
    <property type="match status" value="1"/>
</dbReference>
<dbReference type="FunFam" id="3.40.50.970:FF:000030">
    <property type="entry name" value="1-deoxy-D-xylulose-5-phosphate synthase"/>
    <property type="match status" value="1"/>
</dbReference>
<dbReference type="Gene3D" id="3.40.50.920">
    <property type="match status" value="1"/>
</dbReference>
<dbReference type="Gene3D" id="3.40.50.970">
    <property type="match status" value="2"/>
</dbReference>
<dbReference type="HAMAP" id="MF_00315">
    <property type="entry name" value="DXP_synth"/>
    <property type="match status" value="1"/>
</dbReference>
<dbReference type="InterPro" id="IPR005477">
    <property type="entry name" value="Dxylulose-5-P_synthase"/>
</dbReference>
<dbReference type="InterPro" id="IPR029061">
    <property type="entry name" value="THDP-binding"/>
</dbReference>
<dbReference type="InterPro" id="IPR009014">
    <property type="entry name" value="Transketo_C/PFOR_II"/>
</dbReference>
<dbReference type="InterPro" id="IPR005475">
    <property type="entry name" value="Transketolase-like_Pyr-bd"/>
</dbReference>
<dbReference type="InterPro" id="IPR020826">
    <property type="entry name" value="Transketolase_BS"/>
</dbReference>
<dbReference type="InterPro" id="IPR033248">
    <property type="entry name" value="Transketolase_C"/>
</dbReference>
<dbReference type="InterPro" id="IPR049557">
    <property type="entry name" value="Transketolase_CS"/>
</dbReference>
<dbReference type="NCBIfam" id="TIGR00204">
    <property type="entry name" value="dxs"/>
    <property type="match status" value="1"/>
</dbReference>
<dbReference type="NCBIfam" id="NF003933">
    <property type="entry name" value="PRK05444.2-2"/>
    <property type="match status" value="1"/>
</dbReference>
<dbReference type="PANTHER" id="PTHR43322">
    <property type="entry name" value="1-D-DEOXYXYLULOSE 5-PHOSPHATE SYNTHASE-RELATED"/>
    <property type="match status" value="1"/>
</dbReference>
<dbReference type="PANTHER" id="PTHR43322:SF5">
    <property type="entry name" value="1-DEOXY-D-XYLULOSE-5-PHOSPHATE SYNTHASE, CHLOROPLASTIC"/>
    <property type="match status" value="1"/>
</dbReference>
<dbReference type="Pfam" id="PF13292">
    <property type="entry name" value="DXP_synthase_N"/>
    <property type="match status" value="1"/>
</dbReference>
<dbReference type="Pfam" id="PF02779">
    <property type="entry name" value="Transket_pyr"/>
    <property type="match status" value="1"/>
</dbReference>
<dbReference type="Pfam" id="PF02780">
    <property type="entry name" value="Transketolase_C"/>
    <property type="match status" value="1"/>
</dbReference>
<dbReference type="SMART" id="SM00861">
    <property type="entry name" value="Transket_pyr"/>
    <property type="match status" value="1"/>
</dbReference>
<dbReference type="SUPFAM" id="SSF52518">
    <property type="entry name" value="Thiamin diphosphate-binding fold (THDP-binding)"/>
    <property type="match status" value="2"/>
</dbReference>
<dbReference type="SUPFAM" id="SSF52922">
    <property type="entry name" value="TK C-terminal domain-like"/>
    <property type="match status" value="1"/>
</dbReference>
<dbReference type="PROSITE" id="PS00801">
    <property type="entry name" value="TRANSKETOLASE_1"/>
    <property type="match status" value="1"/>
</dbReference>
<dbReference type="PROSITE" id="PS00802">
    <property type="entry name" value="TRANSKETOLASE_2"/>
    <property type="match status" value="1"/>
</dbReference>
<evidence type="ECO:0000255" key="1">
    <source>
        <dbReference type="HAMAP-Rule" id="MF_00315"/>
    </source>
</evidence>
<proteinExistence type="inferred from homology"/>
<name>DXS_LISW6</name>
<comment type="function">
    <text evidence="1">Catalyzes the acyloin condensation reaction between C atoms 2 and 3 of pyruvate and glyceraldehyde 3-phosphate to yield 1-deoxy-D-xylulose-5-phosphate (DXP).</text>
</comment>
<comment type="catalytic activity">
    <reaction evidence="1">
        <text>D-glyceraldehyde 3-phosphate + pyruvate + H(+) = 1-deoxy-D-xylulose 5-phosphate + CO2</text>
        <dbReference type="Rhea" id="RHEA:12605"/>
        <dbReference type="ChEBI" id="CHEBI:15361"/>
        <dbReference type="ChEBI" id="CHEBI:15378"/>
        <dbReference type="ChEBI" id="CHEBI:16526"/>
        <dbReference type="ChEBI" id="CHEBI:57792"/>
        <dbReference type="ChEBI" id="CHEBI:59776"/>
        <dbReference type="EC" id="2.2.1.7"/>
    </reaction>
</comment>
<comment type="cofactor">
    <cofactor evidence="1">
        <name>Mg(2+)</name>
        <dbReference type="ChEBI" id="CHEBI:18420"/>
    </cofactor>
    <text evidence="1">Binds 1 Mg(2+) ion per subunit.</text>
</comment>
<comment type="cofactor">
    <cofactor evidence="1">
        <name>thiamine diphosphate</name>
        <dbReference type="ChEBI" id="CHEBI:58937"/>
    </cofactor>
    <text evidence="1">Binds 1 thiamine pyrophosphate per subunit.</text>
</comment>
<comment type="pathway">
    <text evidence="1">Metabolic intermediate biosynthesis; 1-deoxy-D-xylulose 5-phosphate biosynthesis; 1-deoxy-D-xylulose 5-phosphate from D-glyceraldehyde 3-phosphate and pyruvate: step 1/1.</text>
</comment>
<comment type="subunit">
    <text evidence="1">Homodimer.</text>
</comment>
<comment type="similarity">
    <text evidence="1">Belongs to the transketolase family. DXPS subfamily.</text>
</comment>
<sequence>MDLLKIKDPSFMKQLDIKELEALAADIRAFLITSTSKSGGHIGPNLGVVELTIALHYTFNSPKDKFIWDVGHQSYVHKILTGRANQFDTLRKHGGLDGFPKRKESIHDVFETGHSSTSLSAACGMVIARDIKKEDFYVIPIIGDGALTGGMAFEALNHIGDMGKDMIVILNDNDMSIAPNVGALHNVLGKLRTSDKFQQTKTNIDKLIRKIPTAGEKLADTAEKTKDSLKHLLVNGTFFEELGFMYLGPIDGHNLEDILTNLEIAKRARGPVILHVVTKKGKGYQPAELDSRGTWHGTGPYKVETGSFIKSVKTAPSWSSVISNELMRLATADERIVAITPAMPVGSKLEKFAKAFPERFFDVGIAEQHATTMAAGLATQGMKPFLAIYSTFLQRAYDQLVHDVCRQKLNVVIGIDRAGLVGADGETHQGIFDISFLNSIPNMIITMPKDEVEARQLMVTAFDYDAGPFAIRYPRGNGLGVELTESNTLIPIGEWETIIQPIDAVIVTFGPTIQLALKAADQLETEGYRVGVINARFIKPLDETLLHQMIKQKIPILTVEESLLKGGFGASVLEFIETNNYTDVAIHRIGLPDEFISHGSVPVILESYGISEAGIELKIKEMLAQSEKLRAKRL</sequence>
<accession>A0AIG6</accession>
<reference key="1">
    <citation type="journal article" date="2006" name="J. Bacteriol.">
        <title>Whole-genome sequence of Listeria welshimeri reveals common steps in genome reduction with Listeria innocua as compared to Listeria monocytogenes.</title>
        <authorList>
            <person name="Hain T."/>
            <person name="Steinweg C."/>
            <person name="Kuenne C.T."/>
            <person name="Billion A."/>
            <person name="Ghai R."/>
            <person name="Chatterjee S.S."/>
            <person name="Domann E."/>
            <person name="Kaerst U."/>
            <person name="Goesmann A."/>
            <person name="Bekel T."/>
            <person name="Bartels D."/>
            <person name="Kaiser O."/>
            <person name="Meyer F."/>
            <person name="Puehler A."/>
            <person name="Weisshaar B."/>
            <person name="Wehland J."/>
            <person name="Liang C."/>
            <person name="Dandekar T."/>
            <person name="Lampidis R."/>
            <person name="Kreft J."/>
            <person name="Goebel W."/>
            <person name="Chakraborty T."/>
        </authorList>
    </citation>
    <scope>NUCLEOTIDE SEQUENCE [LARGE SCALE GENOMIC DNA]</scope>
    <source>
        <strain>ATCC 35897 / DSM 20650 / CCUG 15529 / CIP 8149 / NCTC 11857 / SLCC 5334 / V8</strain>
    </source>
</reference>
<gene>
    <name evidence="1" type="primary">dxs</name>
    <name type="ordered locus">lwe1380</name>
</gene>
<organism>
    <name type="scientific">Listeria welshimeri serovar 6b (strain ATCC 35897 / DSM 20650 / CCUG 15529 / CIP 8149 / NCTC 11857 / SLCC 5334 / V8)</name>
    <dbReference type="NCBI Taxonomy" id="386043"/>
    <lineage>
        <taxon>Bacteria</taxon>
        <taxon>Bacillati</taxon>
        <taxon>Bacillota</taxon>
        <taxon>Bacilli</taxon>
        <taxon>Bacillales</taxon>
        <taxon>Listeriaceae</taxon>
        <taxon>Listeria</taxon>
    </lineage>
</organism>
<protein>
    <recommendedName>
        <fullName evidence="1">1-deoxy-D-xylulose-5-phosphate synthase</fullName>
        <ecNumber evidence="1">2.2.1.7</ecNumber>
    </recommendedName>
    <alternativeName>
        <fullName evidence="1">1-deoxyxylulose-5-phosphate synthase</fullName>
        <shortName evidence="1">DXP synthase</shortName>
        <shortName evidence="1">DXPS</shortName>
    </alternativeName>
</protein>